<protein>
    <recommendedName>
        <fullName evidence="3">Omega conotoxin-CVIF</fullName>
    </recommendedName>
</protein>
<comment type="function">
    <text evidence="2">Omega-conotoxins act at presynaptic membranes, they bind and block voltage-gated calcium channels. This toxin blocks N-type calcium channels (Cav2.2/CACNA1B). It shows a higher potency when Cav2.2/CACNA1B is only expressed with the ancillary subunit CACNB3 (IC(50)=0.1 nM) than on Cav2.2/CACNA1B expressed with the ancillary subunits CACNA2D1 and CACNB3 (IC(50)=19.9 nM). The Cav2.2/CACNA1B block by this toxin is voltage-independent, whereas the recovery from toxin block is voltage-dependent (PubMed:19892914). There is a low recovery at physiological membrane potential and a high recovery with hyperpolarized potential (PubMed:19892914). This indicates that the toxin has a higher affinity for Cav2.2/CACNA1B in the inactivated state (PubMed:19892914). It is noteworthy that ancillary subunits beta modulate recovery from this toxin block (PubMed:19892914). Cav2.2/CACNA1B expressed with the ancillary subunit CACNB2a (isoform 2a) almost recover completely from this toxin block, whereas an expression with CACNB3 exhibits relatively weak recovery (PubMed:19892914). Inhibition by this toxin of excitatory synaptic transmission is reversible (PubMed:19892914). In vivo, when tested on rat model of persistent pain, this toxin blocks chronic pain behavior (PubMed:19892914).</text>
</comment>
<comment type="subcellular location">
    <subcellularLocation>
        <location evidence="5">Secreted</location>
    </subcellularLocation>
</comment>
<comment type="tissue specificity">
    <text evidence="5">Expressed by the venom duct.</text>
</comment>
<comment type="domain">
    <text evidence="1">The presence of a 'disulfide through disulfide knot' structurally defines this protein as a knottin.</text>
</comment>
<comment type="domain">
    <text evidence="4">The cysteine framework is VI/VII (C-C-CC-C-C).</text>
</comment>
<comment type="miscellaneous">
    <text evidence="2">Negative results: does not show effect on Cav1.2/CACNA1C, Cav1.3/CACNA1D, and Cav2.3/CACNA1E and shows a very little inhibition on Cav2.1/CACNA1A.</text>
</comment>
<comment type="similarity">
    <text evidence="4">Belongs to the conotoxin O1 superfamily.</text>
</comment>
<accession>P0DQD4</accession>
<name>O16F_CONCT</name>
<evidence type="ECO:0000250" key="1">
    <source>
        <dbReference type="UniProtKB" id="P05484"/>
    </source>
</evidence>
<evidence type="ECO:0000269" key="2">
    <source>
    </source>
</evidence>
<evidence type="ECO:0000303" key="3">
    <source>
    </source>
</evidence>
<evidence type="ECO:0000305" key="4"/>
<evidence type="ECO:0000305" key="5">
    <source>
    </source>
</evidence>
<organism>
    <name type="scientific">Conus catus</name>
    <name type="common">Cat cone</name>
    <dbReference type="NCBI Taxonomy" id="101291"/>
    <lineage>
        <taxon>Eukaryota</taxon>
        <taxon>Metazoa</taxon>
        <taxon>Spiralia</taxon>
        <taxon>Lophotrochozoa</taxon>
        <taxon>Mollusca</taxon>
        <taxon>Gastropoda</taxon>
        <taxon>Caenogastropoda</taxon>
        <taxon>Neogastropoda</taxon>
        <taxon>Conoidea</taxon>
        <taxon>Conidae</taxon>
        <taxon>Conus</taxon>
        <taxon>Pionoconus</taxon>
    </lineage>
</organism>
<sequence length="25" mass="2672">CKGKGASCRRTSYDCCTGSCRLGRC</sequence>
<dbReference type="SMR" id="P0DQD4"/>
<dbReference type="GO" id="GO:0005576">
    <property type="term" value="C:extracellular region"/>
    <property type="evidence" value="ECO:0007669"/>
    <property type="project" value="UniProtKB-SubCell"/>
</dbReference>
<dbReference type="GO" id="GO:0005246">
    <property type="term" value="F:calcium channel regulator activity"/>
    <property type="evidence" value="ECO:0007669"/>
    <property type="project" value="UniProtKB-KW"/>
</dbReference>
<dbReference type="GO" id="GO:0008200">
    <property type="term" value="F:ion channel inhibitor activity"/>
    <property type="evidence" value="ECO:0007669"/>
    <property type="project" value="InterPro"/>
</dbReference>
<dbReference type="GO" id="GO:0090729">
    <property type="term" value="F:toxin activity"/>
    <property type="evidence" value="ECO:0007669"/>
    <property type="project" value="UniProtKB-KW"/>
</dbReference>
<dbReference type="InterPro" id="IPR012321">
    <property type="entry name" value="Conotoxin_omega-typ_CS"/>
</dbReference>
<dbReference type="SUPFAM" id="SSF57059">
    <property type="entry name" value="omega toxin-like"/>
    <property type="match status" value="1"/>
</dbReference>
<dbReference type="PROSITE" id="PS60004">
    <property type="entry name" value="OMEGA_CONOTOXIN"/>
    <property type="match status" value="1"/>
</dbReference>
<proteinExistence type="evidence at protein level"/>
<feature type="peptide" id="PRO_0000446386" description="Omega conotoxin-CVIF" evidence="5">
    <location>
        <begin position="1"/>
        <end position="25"/>
    </location>
</feature>
<feature type="modified residue" description="Cysteine amide" evidence="1">
    <location>
        <position position="25"/>
    </location>
</feature>
<feature type="disulfide bond" evidence="1">
    <location>
        <begin position="1"/>
        <end position="16"/>
    </location>
</feature>
<feature type="disulfide bond" evidence="1">
    <location>
        <begin position="8"/>
        <end position="20"/>
    </location>
</feature>
<feature type="disulfide bond" evidence="1">
    <location>
        <begin position="15"/>
        <end position="25"/>
    </location>
</feature>
<feature type="mutagenesis site" description="Alters the kinetics of action and improves reversibility without diminishing conotoxin potency and specificity for Cav2.2/CACNA1B and without diminishing the serum stability." evidence="2">
    <original>R</original>
    <variation>K</variation>
    <location>
        <position position="10"/>
    </location>
</feature>
<reference key="1">
    <citation type="journal article" date="2010" name="Mol. Pharmacol.">
        <title>Analgesic (omega)-conotoxins CVIE and CVIF selectively and voltage-dependently block recombinant and native N-type calcium channels.</title>
        <authorList>
            <person name="Berecki G."/>
            <person name="Motin L."/>
            <person name="Haythornthwaite A."/>
            <person name="Vink S."/>
            <person name="Bansal P."/>
            <person name="Drinkwater R."/>
            <person name="Wang C.I."/>
            <person name="Moretta M."/>
            <person name="Lewis R.J."/>
            <person name="Alewood P.F."/>
            <person name="Christie M.J."/>
            <person name="Adams D.J."/>
        </authorList>
    </citation>
    <scope>NUCLEOTIDE SEQUENCE [MRNA]</scope>
    <scope>SYNTHESIS</scope>
    <scope>FUNCTION</scope>
    <scope>BIOASSAY</scope>
    <scope>3D-STRUCTURE MODELING</scope>
    <source>
        <tissue>Venom duct</tissue>
    </source>
</reference>
<reference key="2">
    <citation type="journal article" date="2011" name="Mol. Pharmacol.">
        <title>Correction to 'Analgesic omega-Conotoxins CVIE and CVIF Selectively and Voltage-Dependently Block Recombinant and Native N-Type Calcium Channels'.</title>
        <authorList>
            <person name="Berecki G."/>
            <person name="Motin L."/>
            <person name="Haythornthwaite A."/>
            <person name="Vink S."/>
            <person name="Bansal P."/>
            <person name="Drinkwater R."/>
            <person name="Wang C.I."/>
            <person name="Moretta M."/>
            <person name="Lewis R.J."/>
            <person name="Alewood P.F."/>
            <person name="Christie M.J."/>
            <person name="Adams D.J."/>
        </authorList>
    </citation>
    <scope>ERRATUM OF PUBMED:19892914</scope>
</reference>
<reference key="3">
    <citation type="journal article" date="2014" name="Br. J. Pharmacol.">
        <title>Effects of arginine 10 to lysine substitution on omega-conotoxin CVIE and CVIF block of Cav2.2 channels.</title>
        <authorList>
            <person name="Berecki G."/>
            <person name="Daly N.L."/>
            <person name="Huang Y.H."/>
            <person name="Vink S."/>
            <person name="Craik D.J."/>
            <person name="Alewood P.F."/>
            <person name="Adams D.J."/>
        </authorList>
    </citation>
    <scope>FUNCTION</scope>
    <scope>MUTAGENESIS OF ARG-10</scope>
</reference>
<keyword id="KW-0027">Amidation</keyword>
<keyword id="KW-0108">Calcium channel impairing toxin</keyword>
<keyword id="KW-1015">Disulfide bond</keyword>
<keyword id="KW-0872">Ion channel impairing toxin</keyword>
<keyword id="KW-0960">Knottin</keyword>
<keyword id="KW-0964">Secreted</keyword>
<keyword id="KW-0800">Toxin</keyword>
<keyword id="KW-1218">Voltage-gated calcium channel impairing toxin</keyword>